<sequence length="351" mass="37387">MRFTTLSTAFLALAQNVYAFPIESDLSALDVTLSQVSDTRIKAVVKNTGAENVTFVHLNFFRDSAPVKKVSVYRENNEVVFDGIKRRFQLQGLASESLTTLEAGEVLEDEFDIATTTDLSSGGAITLRSNGLVPVVKDGAVTGYLPYSSNDLKLNIDGAKASTVTKALKPLDRRTKETCSNASRKSALEKALSNTVKLANAAATAARSGSASKFSEYFKTTSSSTRSVVAARLEAVAKEAQSASSGSTTYYCSDTLGYCETNVLAYTLPARNIIANCDIYYSYLPALAGTCHQQDQATTTLHEFTHAPGVYSPGTDDLGYGYSAATSLSSSQAVLNADSYALYANAINLGC</sequence>
<accession>P47189</accession>
<reference key="1">
    <citation type="journal article" date="1994" name="Biochim. Biophys. Acta">
        <title>Molecular cloning and nucleotide sequence of the complementary DNA for penicillolysin gene, plnC, and 18 kDa metalloendopeptidase gene from Penicillium citrinum.</title>
        <authorList>
            <person name="Matsumoto K."/>
            <person name="Yamaguchi M."/>
            <person name="Ichishima E."/>
        </authorList>
    </citation>
    <scope>NUCLEOTIDE SEQUENCE [MRNA]</scope>
    <scope>PARTIAL PROTEIN SEQUENCE</scope>
    <source>
        <strain>NBRC 6026 / FAT 1131</strain>
    </source>
</reference>
<gene>
    <name type="primary">plnC</name>
</gene>
<dbReference type="EC" id="3.4.24.39"/>
<dbReference type="EMBL" id="D25535">
    <property type="protein sequence ID" value="BAA05018.1"/>
    <property type="molecule type" value="mRNA"/>
</dbReference>
<dbReference type="PIR" id="S47635">
    <property type="entry name" value="S47635"/>
</dbReference>
<dbReference type="SMR" id="P47189"/>
<dbReference type="MEROPS" id="M35.001"/>
<dbReference type="GlyCosmos" id="P47189">
    <property type="glycosylation" value="2 sites, No reported glycans"/>
</dbReference>
<dbReference type="OrthoDB" id="412874at2759"/>
<dbReference type="GO" id="GO:0046872">
    <property type="term" value="F:metal ion binding"/>
    <property type="evidence" value="ECO:0007669"/>
    <property type="project" value="UniProtKB-KW"/>
</dbReference>
<dbReference type="GO" id="GO:0004222">
    <property type="term" value="F:metalloendopeptidase activity"/>
    <property type="evidence" value="ECO:0007669"/>
    <property type="project" value="InterPro"/>
</dbReference>
<dbReference type="GO" id="GO:0006508">
    <property type="term" value="P:proteolysis"/>
    <property type="evidence" value="ECO:0007669"/>
    <property type="project" value="UniProtKB-KW"/>
</dbReference>
<dbReference type="CDD" id="cd11008">
    <property type="entry name" value="M35_deuterolysin_like"/>
    <property type="match status" value="1"/>
</dbReference>
<dbReference type="Gene3D" id="2.60.40.2970">
    <property type="match status" value="1"/>
</dbReference>
<dbReference type="Gene3D" id="3.40.390.10">
    <property type="entry name" value="Collagenase (Catalytic Domain)"/>
    <property type="match status" value="1"/>
</dbReference>
<dbReference type="InterPro" id="IPR050414">
    <property type="entry name" value="Fungal_M35_metalloproteases"/>
</dbReference>
<dbReference type="InterPro" id="IPR024079">
    <property type="entry name" value="MetalloPept_cat_dom_sf"/>
</dbReference>
<dbReference type="InterPro" id="IPR001384">
    <property type="entry name" value="Peptidase_M35"/>
</dbReference>
<dbReference type="PANTHER" id="PTHR37016">
    <property type="match status" value="1"/>
</dbReference>
<dbReference type="PANTHER" id="PTHR37016:SF3">
    <property type="entry name" value="NEUTRAL PROTEASE 2-RELATED"/>
    <property type="match status" value="1"/>
</dbReference>
<dbReference type="Pfam" id="PF02102">
    <property type="entry name" value="Peptidase_M35"/>
    <property type="match status" value="1"/>
</dbReference>
<dbReference type="PRINTS" id="PR00768">
    <property type="entry name" value="DEUTEROLYSIN"/>
</dbReference>
<dbReference type="SUPFAM" id="SSF55486">
    <property type="entry name" value="Metalloproteases ('zincins'), catalytic domain"/>
    <property type="match status" value="1"/>
</dbReference>
<dbReference type="PROSITE" id="PS00142">
    <property type="entry name" value="ZINC_PROTEASE"/>
    <property type="match status" value="1"/>
</dbReference>
<keyword id="KW-0165">Cleavage on pair of basic residues</keyword>
<keyword id="KW-0903">Direct protein sequencing</keyword>
<keyword id="KW-0325">Glycoprotein</keyword>
<keyword id="KW-0378">Hydrolase</keyword>
<keyword id="KW-0479">Metal-binding</keyword>
<keyword id="KW-0482">Metalloprotease</keyword>
<keyword id="KW-0645">Protease</keyword>
<keyword id="KW-0732">Signal</keyword>
<keyword id="KW-0862">Zinc</keyword>
<keyword id="KW-0865">Zymogen</keyword>
<organism>
    <name type="scientific">Penicillium citrinum</name>
    <dbReference type="NCBI Taxonomy" id="5077"/>
    <lineage>
        <taxon>Eukaryota</taxon>
        <taxon>Fungi</taxon>
        <taxon>Dikarya</taxon>
        <taxon>Ascomycota</taxon>
        <taxon>Pezizomycotina</taxon>
        <taxon>Eurotiomycetes</taxon>
        <taxon>Eurotiomycetidae</taxon>
        <taxon>Eurotiales</taxon>
        <taxon>Aspergillaceae</taxon>
        <taxon>Penicillium</taxon>
    </lineage>
</organism>
<protein>
    <recommendedName>
        <fullName>Penicillolysin</fullName>
        <ecNumber>3.4.24.39</ecNumber>
    </recommendedName>
    <alternativeName>
        <fullName>Deuterolysin</fullName>
    </alternativeName>
</protein>
<feature type="signal peptide" evidence="2">
    <location>
        <begin position="1"/>
        <end position="19"/>
    </location>
</feature>
<feature type="propeptide" id="PRO_0000029234">
    <location>
        <begin position="20"/>
        <end position="174"/>
    </location>
</feature>
<feature type="chain" id="PRO_0000029235" description="Penicillolysin">
    <location>
        <begin position="175"/>
        <end position="351"/>
    </location>
</feature>
<feature type="active site" evidence="3">
    <location>
        <position position="303"/>
    </location>
</feature>
<feature type="binding site" evidence="3">
    <location>
        <position position="302"/>
    </location>
    <ligand>
        <name>Zn(2+)</name>
        <dbReference type="ChEBI" id="CHEBI:29105"/>
        <note>catalytic</note>
    </ligand>
</feature>
<feature type="binding site" evidence="3">
    <location>
        <position position="306"/>
    </location>
    <ligand>
        <name>Zn(2+)</name>
        <dbReference type="ChEBI" id="CHEBI:29105"/>
        <note>catalytic</note>
    </ligand>
</feature>
<feature type="binding site" evidence="3">
    <location>
        <position position="317"/>
    </location>
    <ligand>
        <name>Zn(2+)</name>
        <dbReference type="ChEBI" id="CHEBI:29105"/>
        <note>catalytic</note>
    </ligand>
</feature>
<feature type="glycosylation site" description="N-linked (GlcNAc...) asparagine" evidence="2">
    <location>
        <position position="52"/>
    </location>
</feature>
<feature type="glycosylation site" description="N-linked (GlcNAc...) asparagine" evidence="2">
    <location>
        <position position="181"/>
    </location>
</feature>
<name>PLNC_PENCI</name>
<evidence type="ECO:0000250" key="1"/>
<evidence type="ECO:0000255" key="2"/>
<evidence type="ECO:0000255" key="3">
    <source>
        <dbReference type="PROSITE-ProRule" id="PRU10095"/>
    </source>
</evidence>
<evidence type="ECO:0000305" key="4"/>
<proteinExistence type="evidence at protein level"/>
<comment type="catalytic activity">
    <reaction>
        <text>Preferential cleavage of bonds with hydrophobic residues in P1'. Also 3-Asn-|-Gln-4 and 8-Gly-|-Ser-9 bonds in insulin B chain.</text>
        <dbReference type="EC" id="3.4.24.39"/>
    </reaction>
</comment>
<comment type="cofactor">
    <cofactor evidence="1">
        <name>Zn(2+)</name>
        <dbReference type="ChEBI" id="CHEBI:29105"/>
    </cofactor>
    <text evidence="1">Binds 1 zinc ion per subunit.</text>
</comment>
<comment type="similarity">
    <text evidence="4">Belongs to the peptidase M35 family.</text>
</comment>